<feature type="chain" id="PRO_1000053107" description="Large ribosomal subunit protein uL18">
    <location>
        <begin position="1"/>
        <end position="116"/>
    </location>
</feature>
<dbReference type="EMBL" id="CP000447">
    <property type="protein sequence ID" value="ABI70027.1"/>
    <property type="molecule type" value="Genomic_DNA"/>
</dbReference>
<dbReference type="RefSeq" id="WP_011635655.1">
    <property type="nucleotide sequence ID" value="NC_008345.1"/>
</dbReference>
<dbReference type="SMR" id="Q089N8"/>
<dbReference type="STRING" id="318167.Sfri_0164"/>
<dbReference type="GeneID" id="90572191"/>
<dbReference type="KEGG" id="sfr:Sfri_0164"/>
<dbReference type="eggNOG" id="COG0256">
    <property type="taxonomic scope" value="Bacteria"/>
</dbReference>
<dbReference type="HOGENOM" id="CLU_098841_0_1_6"/>
<dbReference type="OrthoDB" id="9810939at2"/>
<dbReference type="Proteomes" id="UP000000684">
    <property type="component" value="Chromosome"/>
</dbReference>
<dbReference type="GO" id="GO:0022625">
    <property type="term" value="C:cytosolic large ribosomal subunit"/>
    <property type="evidence" value="ECO:0007669"/>
    <property type="project" value="TreeGrafter"/>
</dbReference>
<dbReference type="GO" id="GO:0008097">
    <property type="term" value="F:5S rRNA binding"/>
    <property type="evidence" value="ECO:0007669"/>
    <property type="project" value="TreeGrafter"/>
</dbReference>
<dbReference type="GO" id="GO:0003735">
    <property type="term" value="F:structural constituent of ribosome"/>
    <property type="evidence" value="ECO:0007669"/>
    <property type="project" value="InterPro"/>
</dbReference>
<dbReference type="GO" id="GO:0006412">
    <property type="term" value="P:translation"/>
    <property type="evidence" value="ECO:0007669"/>
    <property type="project" value="UniProtKB-UniRule"/>
</dbReference>
<dbReference type="CDD" id="cd00432">
    <property type="entry name" value="Ribosomal_L18_L5e"/>
    <property type="match status" value="1"/>
</dbReference>
<dbReference type="FunFam" id="3.30.420.100:FF:000001">
    <property type="entry name" value="50S ribosomal protein L18"/>
    <property type="match status" value="1"/>
</dbReference>
<dbReference type="Gene3D" id="3.30.420.100">
    <property type="match status" value="1"/>
</dbReference>
<dbReference type="HAMAP" id="MF_01337_B">
    <property type="entry name" value="Ribosomal_uL18_B"/>
    <property type="match status" value="1"/>
</dbReference>
<dbReference type="InterPro" id="IPR004389">
    <property type="entry name" value="Ribosomal_uL18_bac-type"/>
</dbReference>
<dbReference type="InterPro" id="IPR005484">
    <property type="entry name" value="Ribosomal_uL18_bac/euk"/>
</dbReference>
<dbReference type="NCBIfam" id="TIGR00060">
    <property type="entry name" value="L18_bact"/>
    <property type="match status" value="1"/>
</dbReference>
<dbReference type="PANTHER" id="PTHR12899">
    <property type="entry name" value="39S RIBOSOMAL PROTEIN L18, MITOCHONDRIAL"/>
    <property type="match status" value="1"/>
</dbReference>
<dbReference type="PANTHER" id="PTHR12899:SF3">
    <property type="entry name" value="LARGE RIBOSOMAL SUBUNIT PROTEIN UL18M"/>
    <property type="match status" value="1"/>
</dbReference>
<dbReference type="Pfam" id="PF00861">
    <property type="entry name" value="Ribosomal_L18p"/>
    <property type="match status" value="1"/>
</dbReference>
<dbReference type="SUPFAM" id="SSF53137">
    <property type="entry name" value="Translational machinery components"/>
    <property type="match status" value="1"/>
</dbReference>
<accession>Q089N8</accession>
<proteinExistence type="inferred from homology"/>
<protein>
    <recommendedName>
        <fullName evidence="1">Large ribosomal subunit protein uL18</fullName>
    </recommendedName>
    <alternativeName>
        <fullName evidence="2">50S ribosomal protein L18</fullName>
    </alternativeName>
</protein>
<evidence type="ECO:0000255" key="1">
    <source>
        <dbReference type="HAMAP-Rule" id="MF_01337"/>
    </source>
</evidence>
<evidence type="ECO:0000305" key="2"/>
<name>RL18_SHEFN</name>
<reference key="1">
    <citation type="submission" date="2006-08" db="EMBL/GenBank/DDBJ databases">
        <title>Complete sequence of Shewanella frigidimarina NCIMB 400.</title>
        <authorList>
            <consortium name="US DOE Joint Genome Institute"/>
            <person name="Copeland A."/>
            <person name="Lucas S."/>
            <person name="Lapidus A."/>
            <person name="Barry K."/>
            <person name="Detter J.C."/>
            <person name="Glavina del Rio T."/>
            <person name="Hammon N."/>
            <person name="Israni S."/>
            <person name="Dalin E."/>
            <person name="Tice H."/>
            <person name="Pitluck S."/>
            <person name="Fredrickson J.K."/>
            <person name="Kolker E."/>
            <person name="McCuel L.A."/>
            <person name="DiChristina T."/>
            <person name="Nealson K.H."/>
            <person name="Newman D."/>
            <person name="Tiedje J.M."/>
            <person name="Zhou J."/>
            <person name="Romine M.F."/>
            <person name="Culley D.E."/>
            <person name="Serres M."/>
            <person name="Chertkov O."/>
            <person name="Brettin T."/>
            <person name="Bruce D."/>
            <person name="Han C."/>
            <person name="Tapia R."/>
            <person name="Gilna P."/>
            <person name="Schmutz J."/>
            <person name="Larimer F."/>
            <person name="Land M."/>
            <person name="Hauser L."/>
            <person name="Kyrpides N."/>
            <person name="Mikhailova N."/>
            <person name="Richardson P."/>
        </authorList>
    </citation>
    <scope>NUCLEOTIDE SEQUENCE [LARGE SCALE GENOMIC DNA]</scope>
    <source>
        <strain>NCIMB 400</strain>
    </source>
</reference>
<gene>
    <name evidence="1" type="primary">rplR</name>
    <name type="ordered locus">Sfri_0164</name>
</gene>
<comment type="function">
    <text evidence="1">This is one of the proteins that bind and probably mediate the attachment of the 5S RNA into the large ribosomal subunit, where it forms part of the central protuberance.</text>
</comment>
<comment type="subunit">
    <text evidence="1">Part of the 50S ribosomal subunit; part of the 5S rRNA/L5/L18/L25 subcomplex. Contacts the 5S and 23S rRNAs.</text>
</comment>
<comment type="similarity">
    <text evidence="1">Belongs to the universal ribosomal protein uL18 family.</text>
</comment>
<sequence>MDKKTSRLRRALRARKKIQELGVNRLVVHRTPRHIYAQVINPEAQVLAVASTVEKAVKELLKSTGNVDAAKAVGKIVAERAIEKGVATVAFDRSGFKYHGRVAALADAAREAGLKF</sequence>
<organism>
    <name type="scientific">Shewanella frigidimarina (strain NCIMB 400)</name>
    <dbReference type="NCBI Taxonomy" id="318167"/>
    <lineage>
        <taxon>Bacteria</taxon>
        <taxon>Pseudomonadati</taxon>
        <taxon>Pseudomonadota</taxon>
        <taxon>Gammaproteobacteria</taxon>
        <taxon>Alteromonadales</taxon>
        <taxon>Shewanellaceae</taxon>
        <taxon>Shewanella</taxon>
    </lineage>
</organism>
<keyword id="KW-1185">Reference proteome</keyword>
<keyword id="KW-0687">Ribonucleoprotein</keyword>
<keyword id="KW-0689">Ribosomal protein</keyword>
<keyword id="KW-0694">RNA-binding</keyword>
<keyword id="KW-0699">rRNA-binding</keyword>